<sequence>MSGESMLNRRIRKQFGKLDKIVEIPDLIGMQKESYGRFLQQGVPPEKREKIGLQAIFQSVFPIKDFTKSASLEFVSYSFGGVKHSVAECIQRGMTYEIPVRIRVRLVVYDMDETSGTSSIRDIKEQEIYFGAIPLMTDNGTFIINGTERVVVSQLHRSSGIFFDHDQGKTHSSGKVVYSSRIIPVRGSWIDIEIDPKDIVHMRIDRRRKFPGTILFKALGYTVKDILDYFYTKERVFVRKKKVFKAFSEDSLRGQRATVRIKHPETGDLIVDKGRIFNKTVLKNMKSAGIDMVPIRPEDVVGAVLAAPLADSSTGEMLADAGDFISEEVFERIGELGIEELQILFIDGAGSTDSIVKTLLLDKVNTKEEALIDIYRRIRPGNPATPEVAQDFIDHLFFKPDYYDLSAVGRLKLNHRLGANAPVSLRTLRREDLLLAVKTLIHLKNTQGPVDDIDHLGNRRVRAVGELLENQYRIGLVRMERAIKERMSLQEVDALMPHDLINPKPVSAVVREFFGTSQLSQFMDQTNPLSETTHKRRLSALGPGGLTRERAGFEVRDVHPSHYGRICPIETPEGPNIGLIVSLSTYARVNGYGFIETPYRVVKDTKVSKEIKMLPAFEEGEHPIAQANAPIGKDGRYVNPVVIARVAGEFSMIKASDVELMDVSPNQLVSVSASLIPFLENDDANRALMGSNMQRQSVPLARTSAPLVGTGVEKVVARDSGVAVVARRPGEVVYVDSGRIVVRHDTDDKDPEAKPVTVYNLSKFIRSNQNTCFNHRPIVKKGQRVAPGDVLADGPATEKGELALGKNVTVAFMPWGGYNFEDSILVGETLVRDGVFTSIHIEEFEVVARDTKLGKEEITCDIPNVGEESLVDLDESGIVRLGAEVKPGDVLVGKITPKGETQLSPEEKLLRAIFGEKGGNVKDTSLRVPPGVSGTVIDAKVFTRRGVEKDTRTRMIEEEEIRVLEKNRDDEIAVIEEVTRERLKALLTGQKCDTPVKKGKKTILAKGDKITAALFDEVPTSQFEKLAVTSDSVTEQAHRVFEWYRTQVDACREEFEARISRYGAGEELPPGVIKMVKVYVAMKRVLSTGDKMAGRHGNKGVVSRILPQEDLPYFEDGTTVDMVLNPLGVPSRMNVGQILEIHLGRAARVLGDQISTMLEEKKYKDLKKKLSAVFNKEIPAAEIEAMSSARLCEFASEYKDGVHMETPVFDGAKEAEIKALLKEGGADETGQAILYDGRTGQPFDERITVGTMYMLKLHHLVDDKLHARSIGPYSLVTQQPLGGKAQFGGQRLGEMEVWAMEAYGAAYALQEFLTVKSDDIAGRTRMYEKIVKGQNVLDPGIPESFKVLTKEMKALGLDVTLIEQQDKE</sequence>
<reference key="1">
    <citation type="submission" date="2007-10" db="EMBL/GenBank/DDBJ databases">
        <title>Complete sequence of Desulfococcus oleovorans Hxd3.</title>
        <authorList>
            <consortium name="US DOE Joint Genome Institute"/>
            <person name="Copeland A."/>
            <person name="Lucas S."/>
            <person name="Lapidus A."/>
            <person name="Barry K."/>
            <person name="Glavina del Rio T."/>
            <person name="Dalin E."/>
            <person name="Tice H."/>
            <person name="Pitluck S."/>
            <person name="Kiss H."/>
            <person name="Brettin T."/>
            <person name="Bruce D."/>
            <person name="Detter J.C."/>
            <person name="Han C."/>
            <person name="Schmutz J."/>
            <person name="Larimer F."/>
            <person name="Land M."/>
            <person name="Hauser L."/>
            <person name="Kyrpides N."/>
            <person name="Kim E."/>
            <person name="Wawrik B."/>
            <person name="Richardson P."/>
        </authorList>
    </citation>
    <scope>NUCLEOTIDE SEQUENCE [LARGE SCALE GENOMIC DNA]</scope>
    <source>
        <strain>DSM 6200 / JCM 39069 / Hxd3</strain>
    </source>
</reference>
<comment type="function">
    <text evidence="1">DNA-dependent RNA polymerase catalyzes the transcription of DNA into RNA using the four ribonucleoside triphosphates as substrates.</text>
</comment>
<comment type="catalytic activity">
    <reaction evidence="1">
        <text>RNA(n) + a ribonucleoside 5'-triphosphate = RNA(n+1) + diphosphate</text>
        <dbReference type="Rhea" id="RHEA:21248"/>
        <dbReference type="Rhea" id="RHEA-COMP:14527"/>
        <dbReference type="Rhea" id="RHEA-COMP:17342"/>
        <dbReference type="ChEBI" id="CHEBI:33019"/>
        <dbReference type="ChEBI" id="CHEBI:61557"/>
        <dbReference type="ChEBI" id="CHEBI:140395"/>
        <dbReference type="EC" id="2.7.7.6"/>
    </reaction>
</comment>
<comment type="subunit">
    <text evidence="1">The RNAP catalytic core consists of 2 alpha, 1 beta, 1 beta' and 1 omega subunit. When a sigma factor is associated with the core the holoenzyme is formed, which can initiate transcription.</text>
</comment>
<comment type="similarity">
    <text evidence="1">Belongs to the RNA polymerase beta chain family.</text>
</comment>
<name>RPOB_DESOH</name>
<accession>A8ZV51</accession>
<gene>
    <name evidence="1" type="primary">rpoB</name>
    <name type="ordered locus">Dole_0702</name>
</gene>
<proteinExistence type="inferred from homology"/>
<organism>
    <name type="scientific">Desulfosudis oleivorans (strain DSM 6200 / JCM 39069 / Hxd3)</name>
    <name type="common">Desulfococcus oleovorans</name>
    <dbReference type="NCBI Taxonomy" id="96561"/>
    <lineage>
        <taxon>Bacteria</taxon>
        <taxon>Pseudomonadati</taxon>
        <taxon>Thermodesulfobacteriota</taxon>
        <taxon>Desulfobacteria</taxon>
        <taxon>Desulfobacterales</taxon>
        <taxon>Desulfosudaceae</taxon>
        <taxon>Desulfosudis</taxon>
    </lineage>
</organism>
<dbReference type="EC" id="2.7.7.6" evidence="1"/>
<dbReference type="EMBL" id="CP000859">
    <property type="protein sequence ID" value="ABW66512.1"/>
    <property type="molecule type" value="Genomic_DNA"/>
</dbReference>
<dbReference type="RefSeq" id="WP_012174131.1">
    <property type="nucleotide sequence ID" value="NC_009943.1"/>
</dbReference>
<dbReference type="SMR" id="A8ZV51"/>
<dbReference type="STRING" id="96561.Dole_0702"/>
<dbReference type="KEGG" id="dol:Dole_0702"/>
<dbReference type="eggNOG" id="COG0085">
    <property type="taxonomic scope" value="Bacteria"/>
</dbReference>
<dbReference type="HOGENOM" id="CLU_000524_4_0_7"/>
<dbReference type="OrthoDB" id="9803954at2"/>
<dbReference type="Proteomes" id="UP000008561">
    <property type="component" value="Chromosome"/>
</dbReference>
<dbReference type="GO" id="GO:0000428">
    <property type="term" value="C:DNA-directed RNA polymerase complex"/>
    <property type="evidence" value="ECO:0007669"/>
    <property type="project" value="UniProtKB-KW"/>
</dbReference>
<dbReference type="GO" id="GO:0003677">
    <property type="term" value="F:DNA binding"/>
    <property type="evidence" value="ECO:0007669"/>
    <property type="project" value="UniProtKB-UniRule"/>
</dbReference>
<dbReference type="GO" id="GO:0003899">
    <property type="term" value="F:DNA-directed RNA polymerase activity"/>
    <property type="evidence" value="ECO:0007669"/>
    <property type="project" value="UniProtKB-UniRule"/>
</dbReference>
<dbReference type="GO" id="GO:0032549">
    <property type="term" value="F:ribonucleoside binding"/>
    <property type="evidence" value="ECO:0007669"/>
    <property type="project" value="InterPro"/>
</dbReference>
<dbReference type="GO" id="GO:0006351">
    <property type="term" value="P:DNA-templated transcription"/>
    <property type="evidence" value="ECO:0007669"/>
    <property type="project" value="UniProtKB-UniRule"/>
</dbReference>
<dbReference type="CDD" id="cd00653">
    <property type="entry name" value="RNA_pol_B_RPB2"/>
    <property type="match status" value="1"/>
</dbReference>
<dbReference type="FunFam" id="3.90.1800.10:FF:000001">
    <property type="entry name" value="DNA-directed RNA polymerase subunit beta"/>
    <property type="match status" value="1"/>
</dbReference>
<dbReference type="Gene3D" id="2.40.50.100">
    <property type="match status" value="1"/>
</dbReference>
<dbReference type="Gene3D" id="2.40.50.150">
    <property type="match status" value="1"/>
</dbReference>
<dbReference type="Gene3D" id="3.90.1100.10">
    <property type="match status" value="2"/>
</dbReference>
<dbReference type="Gene3D" id="2.30.150.10">
    <property type="entry name" value="DNA-directed RNA polymerase, beta subunit, external 1 domain"/>
    <property type="match status" value="1"/>
</dbReference>
<dbReference type="Gene3D" id="2.40.270.10">
    <property type="entry name" value="DNA-directed RNA polymerase, subunit 2, domain 6"/>
    <property type="match status" value="1"/>
</dbReference>
<dbReference type="Gene3D" id="3.90.1800.10">
    <property type="entry name" value="RNA polymerase alpha subunit dimerisation domain"/>
    <property type="match status" value="1"/>
</dbReference>
<dbReference type="Gene3D" id="3.90.1110.10">
    <property type="entry name" value="RNA polymerase Rpb2, domain 2"/>
    <property type="match status" value="1"/>
</dbReference>
<dbReference type="HAMAP" id="MF_01321">
    <property type="entry name" value="RNApol_bact_RpoB"/>
    <property type="match status" value="1"/>
</dbReference>
<dbReference type="InterPro" id="IPR042107">
    <property type="entry name" value="DNA-dir_RNA_pol_bsu_ext_1_sf"/>
</dbReference>
<dbReference type="InterPro" id="IPR019462">
    <property type="entry name" value="DNA-dir_RNA_pol_bsu_external_1"/>
</dbReference>
<dbReference type="InterPro" id="IPR015712">
    <property type="entry name" value="DNA-dir_RNA_pol_su2"/>
</dbReference>
<dbReference type="InterPro" id="IPR007120">
    <property type="entry name" value="DNA-dir_RNAP_su2_dom"/>
</dbReference>
<dbReference type="InterPro" id="IPR037033">
    <property type="entry name" value="DNA-dir_RNAP_su2_hyb_sf"/>
</dbReference>
<dbReference type="InterPro" id="IPR010243">
    <property type="entry name" value="RNA_pol_bsu_bac"/>
</dbReference>
<dbReference type="InterPro" id="IPR007121">
    <property type="entry name" value="RNA_pol_bsu_CS"/>
</dbReference>
<dbReference type="InterPro" id="IPR007644">
    <property type="entry name" value="RNA_pol_bsu_protrusion"/>
</dbReference>
<dbReference type="InterPro" id="IPR007642">
    <property type="entry name" value="RNA_pol_Rpb2_2"/>
</dbReference>
<dbReference type="InterPro" id="IPR037034">
    <property type="entry name" value="RNA_pol_Rpb2_2_sf"/>
</dbReference>
<dbReference type="InterPro" id="IPR007645">
    <property type="entry name" value="RNA_pol_Rpb2_3"/>
</dbReference>
<dbReference type="InterPro" id="IPR007641">
    <property type="entry name" value="RNA_pol_Rpb2_7"/>
</dbReference>
<dbReference type="InterPro" id="IPR014724">
    <property type="entry name" value="RNA_pol_RPB2_OB-fold"/>
</dbReference>
<dbReference type="NCBIfam" id="NF001616">
    <property type="entry name" value="PRK00405.1"/>
    <property type="match status" value="1"/>
</dbReference>
<dbReference type="NCBIfam" id="TIGR02013">
    <property type="entry name" value="rpoB"/>
    <property type="match status" value="1"/>
</dbReference>
<dbReference type="PANTHER" id="PTHR20856">
    <property type="entry name" value="DNA-DIRECTED RNA POLYMERASE I SUBUNIT 2"/>
    <property type="match status" value="1"/>
</dbReference>
<dbReference type="Pfam" id="PF04563">
    <property type="entry name" value="RNA_pol_Rpb2_1"/>
    <property type="match status" value="1"/>
</dbReference>
<dbReference type="Pfam" id="PF04561">
    <property type="entry name" value="RNA_pol_Rpb2_2"/>
    <property type="match status" value="2"/>
</dbReference>
<dbReference type="Pfam" id="PF04565">
    <property type="entry name" value="RNA_pol_Rpb2_3"/>
    <property type="match status" value="1"/>
</dbReference>
<dbReference type="Pfam" id="PF10385">
    <property type="entry name" value="RNA_pol_Rpb2_45"/>
    <property type="match status" value="1"/>
</dbReference>
<dbReference type="Pfam" id="PF00562">
    <property type="entry name" value="RNA_pol_Rpb2_6"/>
    <property type="match status" value="1"/>
</dbReference>
<dbReference type="Pfam" id="PF04560">
    <property type="entry name" value="RNA_pol_Rpb2_7"/>
    <property type="match status" value="1"/>
</dbReference>
<dbReference type="SUPFAM" id="SSF64484">
    <property type="entry name" value="beta and beta-prime subunits of DNA dependent RNA-polymerase"/>
    <property type="match status" value="1"/>
</dbReference>
<dbReference type="PROSITE" id="PS01166">
    <property type="entry name" value="RNA_POL_BETA"/>
    <property type="match status" value="1"/>
</dbReference>
<protein>
    <recommendedName>
        <fullName evidence="1">DNA-directed RNA polymerase subunit beta</fullName>
        <shortName evidence="1">RNAP subunit beta</shortName>
        <ecNumber evidence="1">2.7.7.6</ecNumber>
    </recommendedName>
    <alternativeName>
        <fullName evidence="1">RNA polymerase subunit beta</fullName>
    </alternativeName>
    <alternativeName>
        <fullName evidence="1">Transcriptase subunit beta</fullName>
    </alternativeName>
</protein>
<keyword id="KW-0240">DNA-directed RNA polymerase</keyword>
<keyword id="KW-0548">Nucleotidyltransferase</keyword>
<keyword id="KW-1185">Reference proteome</keyword>
<keyword id="KW-0804">Transcription</keyword>
<keyword id="KW-0808">Transferase</keyword>
<feature type="chain" id="PRO_1000141685" description="DNA-directed RNA polymerase subunit beta">
    <location>
        <begin position="1"/>
        <end position="1368"/>
    </location>
</feature>
<evidence type="ECO:0000255" key="1">
    <source>
        <dbReference type="HAMAP-Rule" id="MF_01321"/>
    </source>
</evidence>